<comment type="function">
    <text evidence="1">Binds the lower part of the 30S subunit head. Binds mRNA in the 70S ribosome, positioning it for translation.</text>
</comment>
<comment type="subunit">
    <text evidence="1">Part of the 30S ribosomal subunit. Forms a tight complex with proteins S10 and S14.</text>
</comment>
<comment type="similarity">
    <text evidence="1">Belongs to the universal ribosomal protein uS3 family.</text>
</comment>
<proteinExistence type="inferred from homology"/>
<evidence type="ECO:0000255" key="1">
    <source>
        <dbReference type="HAMAP-Rule" id="MF_01309"/>
    </source>
</evidence>
<evidence type="ECO:0000256" key="2">
    <source>
        <dbReference type="SAM" id="MobiDB-lite"/>
    </source>
</evidence>
<evidence type="ECO:0000305" key="3"/>
<name>RS3_MYCMM</name>
<accession>B2HSN7</accession>
<keyword id="KW-1185">Reference proteome</keyword>
<keyword id="KW-0687">Ribonucleoprotein</keyword>
<keyword id="KW-0689">Ribosomal protein</keyword>
<keyword id="KW-0694">RNA-binding</keyword>
<keyword id="KW-0699">rRNA-binding</keyword>
<dbReference type="EMBL" id="CP000854">
    <property type="protein sequence ID" value="ACC39495.1"/>
    <property type="molecule type" value="Genomic_DNA"/>
</dbReference>
<dbReference type="RefSeq" id="WP_011739063.1">
    <property type="nucleotide sequence ID" value="NC_010612.1"/>
</dbReference>
<dbReference type="SMR" id="B2HSN7"/>
<dbReference type="STRING" id="216594.MMAR_1037"/>
<dbReference type="GeneID" id="34339762"/>
<dbReference type="KEGG" id="mmi:MMAR_1037"/>
<dbReference type="eggNOG" id="COG0092">
    <property type="taxonomic scope" value="Bacteria"/>
</dbReference>
<dbReference type="HOGENOM" id="CLU_058591_0_0_11"/>
<dbReference type="OrthoDB" id="9806396at2"/>
<dbReference type="Proteomes" id="UP000001190">
    <property type="component" value="Chromosome"/>
</dbReference>
<dbReference type="GO" id="GO:0022627">
    <property type="term" value="C:cytosolic small ribosomal subunit"/>
    <property type="evidence" value="ECO:0007669"/>
    <property type="project" value="TreeGrafter"/>
</dbReference>
<dbReference type="GO" id="GO:0003729">
    <property type="term" value="F:mRNA binding"/>
    <property type="evidence" value="ECO:0007669"/>
    <property type="project" value="UniProtKB-UniRule"/>
</dbReference>
<dbReference type="GO" id="GO:0019843">
    <property type="term" value="F:rRNA binding"/>
    <property type="evidence" value="ECO:0007669"/>
    <property type="project" value="UniProtKB-UniRule"/>
</dbReference>
<dbReference type="GO" id="GO:0003735">
    <property type="term" value="F:structural constituent of ribosome"/>
    <property type="evidence" value="ECO:0007669"/>
    <property type="project" value="InterPro"/>
</dbReference>
<dbReference type="GO" id="GO:0006412">
    <property type="term" value="P:translation"/>
    <property type="evidence" value="ECO:0007669"/>
    <property type="project" value="UniProtKB-UniRule"/>
</dbReference>
<dbReference type="CDD" id="cd02412">
    <property type="entry name" value="KH-II_30S_S3"/>
    <property type="match status" value="1"/>
</dbReference>
<dbReference type="FunFam" id="3.30.1140.32:FF:000002">
    <property type="entry name" value="30S ribosomal protein S3"/>
    <property type="match status" value="1"/>
</dbReference>
<dbReference type="FunFam" id="3.30.300.20:FF:000001">
    <property type="entry name" value="30S ribosomal protein S3"/>
    <property type="match status" value="1"/>
</dbReference>
<dbReference type="Gene3D" id="3.30.300.20">
    <property type="match status" value="1"/>
</dbReference>
<dbReference type="Gene3D" id="3.30.1140.32">
    <property type="entry name" value="Ribosomal protein S3, C-terminal domain"/>
    <property type="match status" value="1"/>
</dbReference>
<dbReference type="HAMAP" id="MF_01309_B">
    <property type="entry name" value="Ribosomal_uS3_B"/>
    <property type="match status" value="1"/>
</dbReference>
<dbReference type="InterPro" id="IPR004087">
    <property type="entry name" value="KH_dom"/>
</dbReference>
<dbReference type="InterPro" id="IPR015946">
    <property type="entry name" value="KH_dom-like_a/b"/>
</dbReference>
<dbReference type="InterPro" id="IPR004044">
    <property type="entry name" value="KH_dom_type_2"/>
</dbReference>
<dbReference type="InterPro" id="IPR009019">
    <property type="entry name" value="KH_sf_prok-type"/>
</dbReference>
<dbReference type="InterPro" id="IPR036419">
    <property type="entry name" value="Ribosomal_S3_C_sf"/>
</dbReference>
<dbReference type="InterPro" id="IPR005704">
    <property type="entry name" value="Ribosomal_uS3_bac-typ"/>
</dbReference>
<dbReference type="InterPro" id="IPR001351">
    <property type="entry name" value="Ribosomal_uS3_C"/>
</dbReference>
<dbReference type="InterPro" id="IPR018280">
    <property type="entry name" value="Ribosomal_uS3_CS"/>
</dbReference>
<dbReference type="NCBIfam" id="TIGR01009">
    <property type="entry name" value="rpsC_bact"/>
    <property type="match status" value="1"/>
</dbReference>
<dbReference type="PANTHER" id="PTHR11760">
    <property type="entry name" value="30S/40S RIBOSOMAL PROTEIN S3"/>
    <property type="match status" value="1"/>
</dbReference>
<dbReference type="PANTHER" id="PTHR11760:SF19">
    <property type="entry name" value="SMALL RIBOSOMAL SUBUNIT PROTEIN US3C"/>
    <property type="match status" value="1"/>
</dbReference>
<dbReference type="Pfam" id="PF07650">
    <property type="entry name" value="KH_2"/>
    <property type="match status" value="1"/>
</dbReference>
<dbReference type="Pfam" id="PF00189">
    <property type="entry name" value="Ribosomal_S3_C"/>
    <property type="match status" value="1"/>
</dbReference>
<dbReference type="SMART" id="SM00322">
    <property type="entry name" value="KH"/>
    <property type="match status" value="1"/>
</dbReference>
<dbReference type="SUPFAM" id="SSF54814">
    <property type="entry name" value="Prokaryotic type KH domain (KH-domain type II)"/>
    <property type="match status" value="1"/>
</dbReference>
<dbReference type="SUPFAM" id="SSF54821">
    <property type="entry name" value="Ribosomal protein S3 C-terminal domain"/>
    <property type="match status" value="1"/>
</dbReference>
<dbReference type="PROSITE" id="PS50823">
    <property type="entry name" value="KH_TYPE_2"/>
    <property type="match status" value="1"/>
</dbReference>
<dbReference type="PROSITE" id="PS00548">
    <property type="entry name" value="RIBOSOMAL_S3"/>
    <property type="match status" value="1"/>
</dbReference>
<sequence length="275" mass="30209">MGQKINPHGFRLGITTDWKSRWYADKQYADYVKEDVAIRRLLSSGLERAGIADVEIERTRDRVRVDIHTARPGIVIGRRGTEADRIRADLEKLTGKQVQLNILEVKNPESQAQLVAQGVAEQLSNRVAFRRAMRKAIQSAMRQPNVKGIRVQCSGRLGGAEMSRSEFYREGRVPLHTLRADIDYGLYEAKTTFGRIGVKVWIYKGDIVGGKRELAAAVPAGADRPRRERPAGSRPRRSGASGTTATGTEAGRAVGSEEPAAAESATTPEAQSTES</sequence>
<organism>
    <name type="scientific">Mycobacterium marinum (strain ATCC BAA-535 / M)</name>
    <dbReference type="NCBI Taxonomy" id="216594"/>
    <lineage>
        <taxon>Bacteria</taxon>
        <taxon>Bacillati</taxon>
        <taxon>Actinomycetota</taxon>
        <taxon>Actinomycetes</taxon>
        <taxon>Mycobacteriales</taxon>
        <taxon>Mycobacteriaceae</taxon>
        <taxon>Mycobacterium</taxon>
        <taxon>Mycobacterium ulcerans group</taxon>
    </lineage>
</organism>
<gene>
    <name evidence="1" type="primary">rpsC</name>
    <name type="ordered locus">MMAR_1037</name>
</gene>
<reference key="1">
    <citation type="journal article" date="2008" name="Genome Res.">
        <title>Insights from the complete genome sequence of Mycobacterium marinum on the evolution of Mycobacterium tuberculosis.</title>
        <authorList>
            <person name="Stinear T.P."/>
            <person name="Seemann T."/>
            <person name="Harrison P.F."/>
            <person name="Jenkin G.A."/>
            <person name="Davies J.K."/>
            <person name="Johnson P.D."/>
            <person name="Abdellah Z."/>
            <person name="Arrowsmith C."/>
            <person name="Chillingworth T."/>
            <person name="Churcher C."/>
            <person name="Clarke K."/>
            <person name="Cronin A."/>
            <person name="Davis P."/>
            <person name="Goodhead I."/>
            <person name="Holroyd N."/>
            <person name="Jagels K."/>
            <person name="Lord A."/>
            <person name="Moule S."/>
            <person name="Mungall K."/>
            <person name="Norbertczak H."/>
            <person name="Quail M.A."/>
            <person name="Rabbinowitsch E."/>
            <person name="Walker D."/>
            <person name="White B."/>
            <person name="Whitehead S."/>
            <person name="Small P.L."/>
            <person name="Brosch R."/>
            <person name="Ramakrishnan L."/>
            <person name="Fischbach M.A."/>
            <person name="Parkhill J."/>
            <person name="Cole S.T."/>
        </authorList>
    </citation>
    <scope>NUCLEOTIDE SEQUENCE [LARGE SCALE GENOMIC DNA]</scope>
    <source>
        <strain>ATCC BAA-535 / M</strain>
    </source>
</reference>
<feature type="chain" id="PRO_1000140992" description="Small ribosomal subunit protein uS3">
    <location>
        <begin position="1"/>
        <end position="275"/>
    </location>
</feature>
<feature type="domain" description="KH type-2" evidence="1">
    <location>
        <begin position="38"/>
        <end position="106"/>
    </location>
</feature>
<feature type="region of interest" description="Disordered" evidence="2">
    <location>
        <begin position="217"/>
        <end position="275"/>
    </location>
</feature>
<feature type="compositionally biased region" description="Low complexity" evidence="2">
    <location>
        <begin position="238"/>
        <end position="275"/>
    </location>
</feature>
<protein>
    <recommendedName>
        <fullName evidence="1">Small ribosomal subunit protein uS3</fullName>
    </recommendedName>
    <alternativeName>
        <fullName evidence="3">30S ribosomal protein S3</fullName>
    </alternativeName>
</protein>